<protein>
    <recommendedName>
        <fullName evidence="2">BRCA2-interacting transcriptional repressor EMSY</fullName>
    </recommendedName>
</protein>
<accession>Q8BMB0</accession>
<accession>Q5FWK5</accession>
<accession>Q80XU1</accession>
<accession>Q8VDW9</accession>
<organism>
    <name type="scientific">Mus musculus</name>
    <name type="common">Mouse</name>
    <dbReference type="NCBI Taxonomy" id="10090"/>
    <lineage>
        <taxon>Eukaryota</taxon>
        <taxon>Metazoa</taxon>
        <taxon>Chordata</taxon>
        <taxon>Craniata</taxon>
        <taxon>Vertebrata</taxon>
        <taxon>Euteleostomi</taxon>
        <taxon>Mammalia</taxon>
        <taxon>Eutheria</taxon>
        <taxon>Euarchontoglires</taxon>
        <taxon>Glires</taxon>
        <taxon>Rodentia</taxon>
        <taxon>Myomorpha</taxon>
        <taxon>Muroidea</taxon>
        <taxon>Muridae</taxon>
        <taxon>Murinae</taxon>
        <taxon>Mus</taxon>
        <taxon>Mus</taxon>
    </lineage>
</organism>
<sequence>MPVVWPTLLDLSRDECKRILRKLELEAYAGVISALRAQGDLTKEKKDLLGELSKVLSISTERHRAEVRRAVNDERLTTIAHKMNLSLYLGERPSYSMSGPNSSSEWSIEGRRLVPLMPRLVPQTAFTVTANAVANAAVQHNASLPVPAETASKDGVSCSDEDEKPRKRRRTNSSSSSPVVLKEVPKAVVPVSKTITVPVSGSPKMSNIMQSIANSLPPHMSPVKITFTKPSTQTTNTTTQKVIIVTTSPSSTFVPNILSKSHNYAAVTKLVPTSVIASTTQKPPVVITASQASLVTSSSNGNSSSTSSPISSTVAVTTVVSSTPSVVMSTVAQGVSTSAIKVASTRLPSPKSLVSGPTQILAQFPKQHQQSPKQQLQQVQQQTQQPVAQPSSVSQQQQPQQSALPPGIKPTIQIKQESGVKIITQQVQPSKILPKPVTATLPTSSNSPIMVVSSNGAIMTTKLVTTPTGTQATYTRPTVSPSLGRVATTPGAATYVKTTSGSIITVVPKSLATLGGKIISSNIVSGTTTKITTIPMTSKPNVIVVQKTTGKGTTIQGLPGKNVVTTLLNAGGEKTLQTVPAGAKPAIITATRPITKMIVTQPKGIGSAVQPAAKIIPTKIVYGQQGKTQVLIKPKPVTFQATVVSEQTRQLVTETLQQASRVADASNSSAQEGKEEPQGYTDSSSSSTESSQSSQDSQPVVHVIASRRQDWSEHEIAMETSPTIIYQDVSSESQSATSTIKALLELQQTTVKEKLESKPRQPTIDLSQMAVPIQMTQEKRHSPESPSIAVVESELVAEYITTVSHRSQPQQPSQPQRTLLQHVAQSQTATQTSVVVKSIPASSPGAITHIMQQALSSHTAFTKHSEELGTEEGEVEEMDTLDPQTGLFYRSALTQSQSTKQQKLSQPQLEQTQLQVKTLQCFQTKQKQTIHLQADQLQHKLTQMPQLSIRHQKLNPLQQEQAQPKPDAQHTQHTVVAKDRQLPTLMAQPPQTVVQVLAVKTTQQLPKLQQAPNQPKIYVQPQTPQSQMALPSSEKQPASQVEQPIITQGSSVTKITFEGRQPPTVTKITGGSSVPKLTSPVTSISPIQASEKTAVSDILQMSLMEAQIDTNVEHMVVDPPKKALATNVLTGEAGALPSTHVVVAGMTKCRESCSSPSAVGPPLTTRKIEAAGVPTTGQFMRIQNVGQKKAEESPTEIIIQAIPQYAIPCHSSSNVVVEPSGLLELNNFTSQQLDDDETAMEQDIDSSTEDGTEPSPSQSAVERS</sequence>
<dbReference type="EMBL" id="BC020109">
    <property type="protein sequence ID" value="AAH20109.1"/>
    <property type="status" value="ALT_INIT"/>
    <property type="molecule type" value="mRNA"/>
</dbReference>
<dbReference type="EMBL" id="BC039956">
    <property type="status" value="NOT_ANNOTATED_CDS"/>
    <property type="molecule type" value="mRNA"/>
</dbReference>
<dbReference type="EMBL" id="BC089304">
    <property type="protein sequence ID" value="AAH89304.1"/>
    <property type="molecule type" value="mRNA"/>
</dbReference>
<dbReference type="EMBL" id="AK032985">
    <property type="protein sequence ID" value="BAC28113.2"/>
    <property type="molecule type" value="mRNA"/>
</dbReference>
<dbReference type="CCDS" id="CCDS40028.1">
    <molecule id="Q8BMB0-1"/>
</dbReference>
<dbReference type="RefSeq" id="NP_001368796.1">
    <molecule id="Q8BMB0-3"/>
    <property type="nucleotide sequence ID" value="NM_001381867.1"/>
</dbReference>
<dbReference type="RefSeq" id="NP_758484.2">
    <molecule id="Q8BMB0-1"/>
    <property type="nucleotide sequence ID" value="NM_172280.2"/>
</dbReference>
<dbReference type="RefSeq" id="XP_006507693.1">
    <molecule id="Q8BMB0-2"/>
    <property type="nucleotide sequence ID" value="XM_006507630.5"/>
</dbReference>
<dbReference type="SMR" id="Q8BMB0"/>
<dbReference type="BioGRID" id="231423">
    <property type="interactions" value="6"/>
</dbReference>
<dbReference type="FunCoup" id="Q8BMB0">
    <property type="interactions" value="3211"/>
</dbReference>
<dbReference type="IntAct" id="Q8BMB0">
    <property type="interactions" value="3"/>
</dbReference>
<dbReference type="STRING" id="10090.ENSMUSP00000145858"/>
<dbReference type="GlyCosmos" id="Q8BMB0">
    <property type="glycosylation" value="7 sites, No reported glycans"/>
</dbReference>
<dbReference type="GlyGen" id="Q8BMB0">
    <property type="glycosylation" value="37 sites, 2 N-linked glycans (2 sites), 1 O-linked glycan (33 sites)"/>
</dbReference>
<dbReference type="iPTMnet" id="Q8BMB0"/>
<dbReference type="PhosphoSitePlus" id="Q8BMB0"/>
<dbReference type="jPOST" id="Q8BMB0"/>
<dbReference type="PaxDb" id="10090-ENSMUSP00000038216"/>
<dbReference type="PeptideAtlas" id="Q8BMB0"/>
<dbReference type="ProteomicsDB" id="277863">
    <molecule id="Q8BMB0-1"/>
</dbReference>
<dbReference type="ProteomicsDB" id="277864">
    <molecule id="Q8BMB0-2"/>
</dbReference>
<dbReference type="ProteomicsDB" id="277865">
    <molecule id="Q8BMB0-3"/>
</dbReference>
<dbReference type="Pumba" id="Q8BMB0"/>
<dbReference type="Antibodypedia" id="31192">
    <property type="antibodies" value="185 antibodies from 27 providers"/>
</dbReference>
<dbReference type="DNASU" id="233545"/>
<dbReference type="Ensembl" id="ENSMUST00000038359.6">
    <molecule id="Q8BMB0-2"/>
    <property type="protein sequence ID" value="ENSMUSP00000038216.6"/>
    <property type="gene ID" value="ENSMUSG00000035401.10"/>
</dbReference>
<dbReference type="Ensembl" id="ENSMUST00000205276.2">
    <molecule id="Q8BMB0-1"/>
    <property type="protein sequence ID" value="ENSMUSP00000145858.2"/>
    <property type="gene ID" value="ENSMUSG00000035401.10"/>
</dbReference>
<dbReference type="GeneID" id="233545"/>
<dbReference type="KEGG" id="mmu:233545"/>
<dbReference type="UCSC" id="uc009iko.1">
    <molecule id="Q8BMB0-1"/>
    <property type="organism name" value="mouse"/>
</dbReference>
<dbReference type="UCSC" id="uc009ikp.1">
    <molecule id="Q8BMB0-2"/>
    <property type="organism name" value="mouse"/>
</dbReference>
<dbReference type="UCSC" id="uc009ikr.1">
    <molecule id="Q8BMB0-3"/>
    <property type="organism name" value="mouse"/>
</dbReference>
<dbReference type="AGR" id="MGI:1924203"/>
<dbReference type="CTD" id="56946"/>
<dbReference type="MGI" id="MGI:1924203">
    <property type="gene designation" value="Emsy"/>
</dbReference>
<dbReference type="VEuPathDB" id="HostDB:ENSMUSG00000035401"/>
<dbReference type="eggNOG" id="KOG4675">
    <property type="taxonomic scope" value="Eukaryota"/>
</dbReference>
<dbReference type="GeneTree" id="ENSGT00390000009554"/>
<dbReference type="HOGENOM" id="CLU_007404_0_0_1"/>
<dbReference type="InParanoid" id="Q8BMB0"/>
<dbReference type="OMA" id="NTTTQKX"/>
<dbReference type="OrthoDB" id="10035579at2759"/>
<dbReference type="PhylomeDB" id="Q8BMB0"/>
<dbReference type="TreeFam" id="TF332401"/>
<dbReference type="BioGRID-ORCS" id="233545">
    <property type="hits" value="9 hits in 111 CRISPR screens"/>
</dbReference>
<dbReference type="ChiTaRS" id="Emsy">
    <property type="organism name" value="mouse"/>
</dbReference>
<dbReference type="PRO" id="PR:Q8BMB0"/>
<dbReference type="Proteomes" id="UP000000589">
    <property type="component" value="Chromosome 7"/>
</dbReference>
<dbReference type="RNAct" id="Q8BMB0">
    <property type="molecule type" value="protein"/>
</dbReference>
<dbReference type="Bgee" id="ENSMUSG00000035401">
    <property type="expression patterns" value="Expressed in embryonic post-anal tail and 254 other cell types or tissues"/>
</dbReference>
<dbReference type="ExpressionAtlas" id="Q8BMB0">
    <property type="expression patterns" value="baseline and differential"/>
</dbReference>
<dbReference type="GO" id="GO:0005654">
    <property type="term" value="C:nucleoplasm"/>
    <property type="evidence" value="ECO:0007669"/>
    <property type="project" value="Ensembl"/>
</dbReference>
<dbReference type="GO" id="GO:0042802">
    <property type="term" value="F:identical protein binding"/>
    <property type="evidence" value="ECO:0000353"/>
    <property type="project" value="MGI"/>
</dbReference>
<dbReference type="GO" id="GO:0006325">
    <property type="term" value="P:chromatin organization"/>
    <property type="evidence" value="ECO:0007669"/>
    <property type="project" value="UniProtKB-KW"/>
</dbReference>
<dbReference type="GO" id="GO:0006281">
    <property type="term" value="P:DNA repair"/>
    <property type="evidence" value="ECO:0007669"/>
    <property type="project" value="UniProtKB-KW"/>
</dbReference>
<dbReference type="GO" id="GO:0006355">
    <property type="term" value="P:regulation of DNA-templated transcription"/>
    <property type="evidence" value="ECO:0007669"/>
    <property type="project" value="InterPro"/>
</dbReference>
<dbReference type="FunFam" id="1.10.1240.40:FF:000001">
    <property type="entry name" value="BRCA2-interacting transcriptional repressor EMSY isoform X1"/>
    <property type="match status" value="1"/>
</dbReference>
<dbReference type="Gene3D" id="1.10.1240.40">
    <property type="entry name" value="ENT domain"/>
    <property type="match status" value="1"/>
</dbReference>
<dbReference type="InterPro" id="IPR033482">
    <property type="entry name" value="EMSY"/>
</dbReference>
<dbReference type="InterPro" id="IPR005491">
    <property type="entry name" value="ENT_dom"/>
</dbReference>
<dbReference type="InterPro" id="IPR036142">
    <property type="entry name" value="ENT_dom-like_sf"/>
</dbReference>
<dbReference type="PANTHER" id="PTHR16500">
    <property type="entry name" value="BRCA2-INTERACTING TRANSCRIPTIONAL REPRESSOR EMSY"/>
    <property type="match status" value="1"/>
</dbReference>
<dbReference type="PANTHER" id="PTHR16500:SF3">
    <property type="entry name" value="BRCA2-INTERACTING TRANSCRIPTIONAL REPRESSOR EMSY"/>
    <property type="match status" value="1"/>
</dbReference>
<dbReference type="Pfam" id="PF03735">
    <property type="entry name" value="ENT"/>
    <property type="match status" value="1"/>
</dbReference>
<dbReference type="SMART" id="SM01191">
    <property type="entry name" value="ENT"/>
    <property type="match status" value="1"/>
</dbReference>
<dbReference type="SUPFAM" id="SSF158639">
    <property type="entry name" value="ENT-like"/>
    <property type="match status" value="1"/>
</dbReference>
<dbReference type="PROSITE" id="PS51138">
    <property type="entry name" value="ENT"/>
    <property type="match status" value="1"/>
</dbReference>
<keyword id="KW-0025">Alternative splicing</keyword>
<keyword id="KW-0156">Chromatin regulator</keyword>
<keyword id="KW-0227">DNA damage</keyword>
<keyword id="KW-0234">DNA repair</keyword>
<keyword id="KW-0325">Glycoprotein</keyword>
<keyword id="KW-0539">Nucleus</keyword>
<keyword id="KW-0597">Phosphoprotein</keyword>
<keyword id="KW-1185">Reference proteome</keyword>
<keyword id="KW-0678">Repressor</keyword>
<keyword id="KW-0804">Transcription</keyword>
<keyword id="KW-0805">Transcription regulation</keyword>
<evidence type="ECO:0000250" key="1"/>
<evidence type="ECO:0000250" key="2">
    <source>
        <dbReference type="UniProtKB" id="Q7Z589"/>
    </source>
</evidence>
<evidence type="ECO:0000255" key="3">
    <source>
        <dbReference type="PROSITE-ProRule" id="PRU00476"/>
    </source>
</evidence>
<evidence type="ECO:0000256" key="4">
    <source>
        <dbReference type="SAM" id="MobiDB-lite"/>
    </source>
</evidence>
<evidence type="ECO:0000269" key="5">
    <source>
    </source>
</evidence>
<evidence type="ECO:0000269" key="6">
    <source>
    </source>
</evidence>
<evidence type="ECO:0000303" key="7">
    <source>
    </source>
</evidence>
<evidence type="ECO:0000303" key="8">
    <source>
    </source>
</evidence>
<evidence type="ECO:0000305" key="9"/>
<evidence type="ECO:0007744" key="10">
    <source>
    </source>
</evidence>
<comment type="function">
    <text evidence="2">Regulator which is able to repress transcription, possibly via its interaction with a multiprotein chromatin remodeling complex that modifies the chromatin (By similarity). Its interaction with BRCA2 suggests that it may play a central role in the DNA repair function of BRCA2 (By similarity). Mediates ligand-dependent transcriptional activation by nuclear hormone receptors (By similarity).</text>
</comment>
<comment type="subunit">
    <text evidence="2 5">Homodimer (By similarity). Interacts with the transactivation domain of BRCA2 (PubMed:14651845). Interacts with CBX1 (via chromoshadow domain) (By similarity). Interacts with ZMYND11 (By similarity). Does not interact with CBX3 or CBX5 (By similarity). Component of a nuclear receptor-mediated transcription complex composed of at least ZNF335, CCAR2 and EMSY; the complex stimulates the transcription of nuclear receptor target genes such as SOX9 and HOXA1 (By similarity). Within the complex interacts with CCAR2 and ZNF335 (By similarity). Components of this complex may associate with components of a histone methylation complex to form a complex at least composed of ZNF335, HCFC1, CCAR2, EMSY, MKI67, RBBP5, ASH2L and WDR5 (By similarity). Within this complex, interacts with ASH2L and RBBP5 (By similarity).</text>
</comment>
<comment type="subcellular location">
    <subcellularLocation>
        <location evidence="5">Nucleus</location>
    </subcellularLocation>
    <text>Localizes to DNA damage markers in irradiated cells, suggesting that it participates in DNA repair process.</text>
</comment>
<comment type="alternative products">
    <event type="alternative splicing"/>
    <isoform>
        <id>Q8BMB0-1</id>
        <name>1</name>
        <sequence type="displayed"/>
    </isoform>
    <isoform>
        <id>Q8BMB0-2</id>
        <name>2</name>
        <sequence type="described" ref="VSP_010433 VSP_010434"/>
    </isoform>
    <isoform>
        <id>Q8BMB0-3</id>
        <name>3</name>
        <sequence type="described" ref="VSP_010432"/>
    </isoform>
</comment>
<comment type="sequence caution" evidence="9">
    <conflict type="erroneous initiation">
        <sequence resource="EMBL-CDS" id="AAH20109"/>
    </conflict>
</comment>
<comment type="sequence caution" evidence="9">
    <conflict type="frameshift">
        <sequence resource="EMBL" id="BC039956"/>
    </conflict>
</comment>
<reference key="1">
    <citation type="journal article" date="2004" name="Genome Res.">
        <title>The status, quality, and expansion of the NIH full-length cDNA project: the Mammalian Gene Collection (MGC).</title>
        <authorList>
            <consortium name="The MGC Project Team"/>
        </authorList>
    </citation>
    <scope>NUCLEOTIDE SEQUENCE [LARGE SCALE MRNA] (ISOFORMS 1 AND 2)</scope>
    <source>
        <strain>C57BL/6J</strain>
        <strain>Czech II</strain>
        <strain>FVB/N</strain>
        <tissue>Brain</tissue>
        <tissue>Kidney</tissue>
        <tissue>Mammary gland</tissue>
    </source>
</reference>
<reference key="2">
    <citation type="journal article" date="2005" name="Science">
        <title>The transcriptional landscape of the mammalian genome.</title>
        <authorList>
            <person name="Carninci P."/>
            <person name="Kasukawa T."/>
            <person name="Katayama S."/>
            <person name="Gough J."/>
            <person name="Frith M.C."/>
            <person name="Maeda N."/>
            <person name="Oyama R."/>
            <person name="Ravasi T."/>
            <person name="Lenhard B."/>
            <person name="Wells C."/>
            <person name="Kodzius R."/>
            <person name="Shimokawa K."/>
            <person name="Bajic V.B."/>
            <person name="Brenner S.E."/>
            <person name="Batalov S."/>
            <person name="Forrest A.R."/>
            <person name="Zavolan M."/>
            <person name="Davis M.J."/>
            <person name="Wilming L.G."/>
            <person name="Aidinis V."/>
            <person name="Allen J.E."/>
            <person name="Ambesi-Impiombato A."/>
            <person name="Apweiler R."/>
            <person name="Aturaliya R.N."/>
            <person name="Bailey T.L."/>
            <person name="Bansal M."/>
            <person name="Baxter L."/>
            <person name="Beisel K.W."/>
            <person name="Bersano T."/>
            <person name="Bono H."/>
            <person name="Chalk A.M."/>
            <person name="Chiu K.P."/>
            <person name="Choudhary V."/>
            <person name="Christoffels A."/>
            <person name="Clutterbuck D.R."/>
            <person name="Crowe M.L."/>
            <person name="Dalla E."/>
            <person name="Dalrymple B.P."/>
            <person name="de Bono B."/>
            <person name="Della Gatta G."/>
            <person name="di Bernardo D."/>
            <person name="Down T."/>
            <person name="Engstrom P."/>
            <person name="Fagiolini M."/>
            <person name="Faulkner G."/>
            <person name="Fletcher C.F."/>
            <person name="Fukushima T."/>
            <person name="Furuno M."/>
            <person name="Futaki S."/>
            <person name="Gariboldi M."/>
            <person name="Georgii-Hemming P."/>
            <person name="Gingeras T.R."/>
            <person name="Gojobori T."/>
            <person name="Green R.E."/>
            <person name="Gustincich S."/>
            <person name="Harbers M."/>
            <person name="Hayashi Y."/>
            <person name="Hensch T.K."/>
            <person name="Hirokawa N."/>
            <person name="Hill D."/>
            <person name="Huminiecki L."/>
            <person name="Iacono M."/>
            <person name="Ikeo K."/>
            <person name="Iwama A."/>
            <person name="Ishikawa T."/>
            <person name="Jakt M."/>
            <person name="Kanapin A."/>
            <person name="Katoh M."/>
            <person name="Kawasawa Y."/>
            <person name="Kelso J."/>
            <person name="Kitamura H."/>
            <person name="Kitano H."/>
            <person name="Kollias G."/>
            <person name="Krishnan S.P."/>
            <person name="Kruger A."/>
            <person name="Kummerfeld S.K."/>
            <person name="Kurochkin I.V."/>
            <person name="Lareau L.F."/>
            <person name="Lazarevic D."/>
            <person name="Lipovich L."/>
            <person name="Liu J."/>
            <person name="Liuni S."/>
            <person name="McWilliam S."/>
            <person name="Madan Babu M."/>
            <person name="Madera M."/>
            <person name="Marchionni L."/>
            <person name="Matsuda H."/>
            <person name="Matsuzawa S."/>
            <person name="Miki H."/>
            <person name="Mignone F."/>
            <person name="Miyake S."/>
            <person name="Morris K."/>
            <person name="Mottagui-Tabar S."/>
            <person name="Mulder N."/>
            <person name="Nakano N."/>
            <person name="Nakauchi H."/>
            <person name="Ng P."/>
            <person name="Nilsson R."/>
            <person name="Nishiguchi S."/>
            <person name="Nishikawa S."/>
            <person name="Nori F."/>
            <person name="Ohara O."/>
            <person name="Okazaki Y."/>
            <person name="Orlando V."/>
            <person name="Pang K.C."/>
            <person name="Pavan W.J."/>
            <person name="Pavesi G."/>
            <person name="Pesole G."/>
            <person name="Petrovsky N."/>
            <person name="Piazza S."/>
            <person name="Reed J."/>
            <person name="Reid J.F."/>
            <person name="Ring B.Z."/>
            <person name="Ringwald M."/>
            <person name="Rost B."/>
            <person name="Ruan Y."/>
            <person name="Salzberg S.L."/>
            <person name="Sandelin A."/>
            <person name="Schneider C."/>
            <person name="Schoenbach C."/>
            <person name="Sekiguchi K."/>
            <person name="Semple C.A."/>
            <person name="Seno S."/>
            <person name="Sessa L."/>
            <person name="Sheng Y."/>
            <person name="Shibata Y."/>
            <person name="Shimada H."/>
            <person name="Shimada K."/>
            <person name="Silva D."/>
            <person name="Sinclair B."/>
            <person name="Sperling S."/>
            <person name="Stupka E."/>
            <person name="Sugiura K."/>
            <person name="Sultana R."/>
            <person name="Takenaka Y."/>
            <person name="Taki K."/>
            <person name="Tammoja K."/>
            <person name="Tan S.L."/>
            <person name="Tang S."/>
            <person name="Taylor M.S."/>
            <person name="Tegner J."/>
            <person name="Teichmann S.A."/>
            <person name="Ueda H.R."/>
            <person name="van Nimwegen E."/>
            <person name="Verardo R."/>
            <person name="Wei C.L."/>
            <person name="Yagi K."/>
            <person name="Yamanishi H."/>
            <person name="Zabarovsky E."/>
            <person name="Zhu S."/>
            <person name="Zimmer A."/>
            <person name="Hide W."/>
            <person name="Bult C."/>
            <person name="Grimmond S.M."/>
            <person name="Teasdale R.D."/>
            <person name="Liu E.T."/>
            <person name="Brusic V."/>
            <person name="Quackenbush J."/>
            <person name="Wahlestedt C."/>
            <person name="Mattick J.S."/>
            <person name="Hume D.A."/>
            <person name="Kai C."/>
            <person name="Sasaki D."/>
            <person name="Tomaru Y."/>
            <person name="Fukuda S."/>
            <person name="Kanamori-Katayama M."/>
            <person name="Suzuki M."/>
            <person name="Aoki J."/>
            <person name="Arakawa T."/>
            <person name="Iida J."/>
            <person name="Imamura K."/>
            <person name="Itoh M."/>
            <person name="Kato T."/>
            <person name="Kawaji H."/>
            <person name="Kawagashira N."/>
            <person name="Kawashima T."/>
            <person name="Kojima M."/>
            <person name="Kondo S."/>
            <person name="Konno H."/>
            <person name="Nakano K."/>
            <person name="Ninomiya N."/>
            <person name="Nishio T."/>
            <person name="Okada M."/>
            <person name="Plessy C."/>
            <person name="Shibata K."/>
            <person name="Shiraki T."/>
            <person name="Suzuki S."/>
            <person name="Tagami M."/>
            <person name="Waki K."/>
            <person name="Watahiki A."/>
            <person name="Okamura-Oho Y."/>
            <person name="Suzuki H."/>
            <person name="Kawai J."/>
            <person name="Hayashizaki Y."/>
        </authorList>
    </citation>
    <scope>NUCLEOTIDE SEQUENCE [LARGE SCALE MRNA] OF 1-750 (ISOFORM 3)</scope>
    <source>
        <strain>C57BL/6J</strain>
        <tissue>Mesonephros</tissue>
    </source>
</reference>
<reference key="3">
    <citation type="journal article" date="2003" name="Cell">
        <title>EMSY links the BRCA2 pathway to sporadic breast and ovarian cancer.</title>
        <authorList>
            <person name="Hughes-Davies L."/>
            <person name="Huntsman D."/>
            <person name="Ruas M."/>
            <person name="Fuks F."/>
            <person name="Bye J."/>
            <person name="Chin S.-F."/>
            <person name="Milner J."/>
            <person name="Brown L.A."/>
            <person name="Hsu F."/>
            <person name="Gilks B."/>
            <person name="Nielsen T."/>
            <person name="Schulzer M."/>
            <person name="Chia S."/>
            <person name="Ragaz J."/>
            <person name="Cahn A."/>
            <person name="Linger L."/>
            <person name="Ozdag H."/>
            <person name="Cattaneo E."/>
            <person name="Jordanova E.S."/>
            <person name="Schuuring E."/>
            <person name="Yu D.S."/>
            <person name="Venkitaraman A."/>
            <person name="Ponder B."/>
            <person name="Doherty A."/>
            <person name="Aparicio S."/>
            <person name="Bentley D."/>
            <person name="Theillet C."/>
            <person name="Ponting C.P."/>
            <person name="Caldas C."/>
            <person name="Kouzarides T."/>
        </authorList>
    </citation>
    <scope>SUBCELLULAR LOCATION</scope>
    <scope>INTERACTION WITH BRCA2</scope>
</reference>
<reference key="4">
    <citation type="journal article" date="2006" name="Mol. Cell. Proteomics">
        <title>O-linked N-acetylglucosamine proteomics of postsynaptic density preparations using lectin weak affinity chromatography and mass spectrometry.</title>
        <authorList>
            <person name="Vosseller K."/>
            <person name="Trinidad J.C."/>
            <person name="Chalkley R.J."/>
            <person name="Specht C.G."/>
            <person name="Thalhammer A."/>
            <person name="Lynn A.J."/>
            <person name="Snedecor J.O."/>
            <person name="Guan S."/>
            <person name="Medzihradszky K.F."/>
            <person name="Maltby D.A."/>
            <person name="Schoepfer R."/>
            <person name="Burlingame A.L."/>
        </authorList>
    </citation>
    <scope>GLYCOSYLATION [LARGE SCALE ANALYSIS] AT SER-192</scope>
    <source>
        <tissue>Brain</tissue>
    </source>
</reference>
<reference key="5">
    <citation type="journal article" date="2010" name="Cell">
        <title>A tissue-specific atlas of mouse protein phosphorylation and expression.</title>
        <authorList>
            <person name="Huttlin E.L."/>
            <person name="Jedrychowski M.P."/>
            <person name="Elias J.E."/>
            <person name="Goswami T."/>
            <person name="Rad R."/>
            <person name="Beausoleil S.A."/>
            <person name="Villen J."/>
            <person name="Haas W."/>
            <person name="Sowa M.E."/>
            <person name="Gygi S.P."/>
        </authorList>
    </citation>
    <scope>PHOSPHORYLATION [LARGE SCALE ANALYSIS] AT SER-173; SER-177; SER-782 AND SER-785</scope>
    <scope>IDENTIFICATION BY MASS SPECTROMETRY [LARGE SCALE ANALYSIS]</scope>
    <source>
        <tissue>Kidney</tissue>
        <tissue>Lung</tissue>
        <tissue>Spleen</tissue>
        <tissue>Testis</tissue>
    </source>
</reference>
<feature type="chain" id="PRO_0000086969" description="BRCA2-interacting transcriptional repressor EMSY">
    <location>
        <begin position="1"/>
        <end position="1264"/>
    </location>
</feature>
<feature type="domain" description="ENT" evidence="3">
    <location>
        <begin position="16"/>
        <end position="114"/>
    </location>
</feature>
<feature type="region of interest" description="Interaction with BRCA2" evidence="1">
    <location>
        <begin position="1"/>
        <end position="442"/>
    </location>
</feature>
<feature type="region of interest" description="Interaction with ZMYND11" evidence="1">
    <location>
        <begin position="118"/>
        <end position="122"/>
    </location>
</feature>
<feature type="region of interest" description="Disordered" evidence="4">
    <location>
        <begin position="145"/>
        <end position="179"/>
    </location>
</feature>
<feature type="region of interest" description="Disordered" evidence="4">
    <location>
        <begin position="364"/>
        <end position="407"/>
    </location>
</feature>
<feature type="region of interest" description="Disordered" evidence="4">
    <location>
        <begin position="660"/>
        <end position="700"/>
    </location>
</feature>
<feature type="region of interest" description="Disordered" evidence="4">
    <location>
        <begin position="1232"/>
        <end position="1264"/>
    </location>
</feature>
<feature type="compositionally biased region" description="Low complexity" evidence="4">
    <location>
        <begin position="364"/>
        <end position="406"/>
    </location>
</feature>
<feature type="compositionally biased region" description="Polar residues" evidence="4">
    <location>
        <begin position="660"/>
        <end position="671"/>
    </location>
</feature>
<feature type="compositionally biased region" description="Low complexity" evidence="4">
    <location>
        <begin position="681"/>
        <end position="698"/>
    </location>
</feature>
<feature type="compositionally biased region" description="Acidic residues" evidence="4">
    <location>
        <begin position="1233"/>
        <end position="1252"/>
    </location>
</feature>
<feature type="compositionally biased region" description="Polar residues" evidence="4">
    <location>
        <begin position="1254"/>
        <end position="1264"/>
    </location>
</feature>
<feature type="modified residue" description="Phosphothreonine" evidence="2">
    <location>
        <position position="171"/>
    </location>
</feature>
<feature type="modified residue" description="Phosphoserine" evidence="10">
    <location>
        <position position="173"/>
    </location>
</feature>
<feature type="modified residue" description="Phosphoserine" evidence="10">
    <location>
        <position position="177"/>
    </location>
</feature>
<feature type="modified residue" description="Phosphoserine" evidence="2">
    <location>
        <position position="202"/>
    </location>
</feature>
<feature type="modified residue" description="Phosphoserine" evidence="10">
    <location>
        <position position="782"/>
    </location>
</feature>
<feature type="modified residue" description="Phosphoserine" evidence="10">
    <location>
        <position position="785"/>
    </location>
</feature>
<feature type="modified residue" description="Phosphoserine" evidence="2">
    <location>
        <position position="1085"/>
    </location>
</feature>
<feature type="glycosylation site" description="O-linked (GlcNAc) serine" evidence="6">
    <location>
        <position position="192"/>
    </location>
</feature>
<feature type="glycosylation site" description="O-linked (GlcNAc) serine" evidence="1">
    <location>
        <position position="200"/>
    </location>
</feature>
<feature type="glycosylation site" description="O-linked (GlcNAc) threonine" evidence="1">
    <location>
        <position position="235"/>
    </location>
</feature>
<feature type="glycosylation site" description="O-linked (GlcNAc) threonine" evidence="1">
    <location>
        <position position="465"/>
    </location>
</feature>
<feature type="glycosylation site" description="O-linked (GlcNAc) threonine" evidence="1">
    <location>
        <position position="470"/>
    </location>
</feature>
<feature type="glycosylation site" description="O-linked (GlcNAc) serine" evidence="1">
    <location>
        <position position="521"/>
    </location>
</feature>
<feature type="glycosylation site" description="O-linked (GlcNAc) threonine" evidence="1">
    <location>
        <position position="1069"/>
    </location>
</feature>
<feature type="splice variant" id="VSP_010432" description="In isoform 3." evidence="8">
    <original>KMNLSLYLGERPSYS</original>
    <variation>N</variation>
    <location>
        <begin position="82"/>
        <end position="96"/>
    </location>
</feature>
<feature type="splice variant" id="VSP_010433" description="In isoform 2." evidence="7">
    <original>T</original>
    <variation>TERTDEGTEVAFPLL</variation>
    <location>
        <position position="802"/>
    </location>
</feature>
<feature type="splice variant" id="VSP_010434" description="In isoform 2." evidence="7">
    <location>
        <begin position="1040"/>
        <end position="1199"/>
    </location>
</feature>
<feature type="sequence conflict" description="In Ref. 1; BC039956." evidence="9" ref="1">
    <original>V</original>
    <variation>A</variation>
    <location>
        <position position="975"/>
    </location>
</feature>
<gene>
    <name evidence="2" type="primary">Emsy</name>
</gene>
<name>EMSY_MOUSE</name>
<proteinExistence type="evidence at protein level"/>